<feature type="chain" id="PRO_1000135660" description="3-isopropylmalate dehydratase large subunit">
    <location>
        <begin position="1"/>
        <end position="469"/>
    </location>
</feature>
<feature type="binding site" evidence="1">
    <location>
        <position position="347"/>
    </location>
    <ligand>
        <name>[4Fe-4S] cluster</name>
        <dbReference type="ChEBI" id="CHEBI:49883"/>
    </ligand>
</feature>
<feature type="binding site" evidence="1">
    <location>
        <position position="408"/>
    </location>
    <ligand>
        <name>[4Fe-4S] cluster</name>
        <dbReference type="ChEBI" id="CHEBI:49883"/>
    </ligand>
</feature>
<feature type="binding site" evidence="1">
    <location>
        <position position="411"/>
    </location>
    <ligand>
        <name>[4Fe-4S] cluster</name>
        <dbReference type="ChEBI" id="CHEBI:49883"/>
    </ligand>
</feature>
<keyword id="KW-0004">4Fe-4S</keyword>
<keyword id="KW-0028">Amino-acid biosynthesis</keyword>
<keyword id="KW-0100">Branched-chain amino acid biosynthesis</keyword>
<keyword id="KW-0408">Iron</keyword>
<keyword id="KW-0411">Iron-sulfur</keyword>
<keyword id="KW-0432">Leucine biosynthesis</keyword>
<keyword id="KW-0456">Lyase</keyword>
<keyword id="KW-0479">Metal-binding</keyword>
<evidence type="ECO:0000255" key="1">
    <source>
        <dbReference type="HAMAP-Rule" id="MF_01026"/>
    </source>
</evidence>
<gene>
    <name evidence="1" type="primary">leuC</name>
    <name type="ordered locus">APJL_0140</name>
</gene>
<sequence length="469" mass="50766">MAKTLYEKLFDAHVVYEAAGETPILYINRHLIHEVTSPQAFDGLRVAGRQVRQIGKTFGTMDHSISTQVRDVNKLEGQAKIQVLELAKNCEASGISLFDMQTKEQGIVHVMGPEQGLTLPGMTIVCGDSHTATHGAFGALAFGIGTSEVEHVLATQTLKQARAKSMKVEVRGKVNPGITAKDIVLAIIGKTTMAGGTGHVVEFYGEAIRDLSMEGRMTVCNMAIEFGAKAGLVAPDETTFAYLKDRPHAPKGKDWDDAVEYWKTLKSDDDAVFDSVVVLEAKDIAPQVTWGTNPGQVIGIDQVVPNPQEMADPVTKASAEKALAYIGLDANTDMKNIPVDQVFIGSCTNSRIEDLRAAAAVMKGRKKADNVKRVLVVPGSGLVKEQAEKEGLDKIFIEAGAEWRNPGCSMCLGMNDDRLGEWERCASTSNRNFEGRQGRNGRTHLVSPAMAAAAAMFGKFVDIRHVELN</sequence>
<accession>B0BS44</accession>
<dbReference type="EC" id="4.2.1.33" evidence="1"/>
<dbReference type="EMBL" id="CP000687">
    <property type="protein sequence ID" value="ABY68744.1"/>
    <property type="molecule type" value="Genomic_DNA"/>
</dbReference>
<dbReference type="RefSeq" id="WP_012262710.1">
    <property type="nucleotide sequence ID" value="NC_010278.1"/>
</dbReference>
<dbReference type="SMR" id="B0BS44"/>
<dbReference type="KEGG" id="apj:APJL_0140"/>
<dbReference type="HOGENOM" id="CLU_006714_3_4_6"/>
<dbReference type="UniPathway" id="UPA00048">
    <property type="reaction ID" value="UER00071"/>
</dbReference>
<dbReference type="Proteomes" id="UP000008547">
    <property type="component" value="Chromosome"/>
</dbReference>
<dbReference type="GO" id="GO:0003861">
    <property type="term" value="F:3-isopropylmalate dehydratase activity"/>
    <property type="evidence" value="ECO:0007669"/>
    <property type="project" value="UniProtKB-UniRule"/>
</dbReference>
<dbReference type="GO" id="GO:0051539">
    <property type="term" value="F:4 iron, 4 sulfur cluster binding"/>
    <property type="evidence" value="ECO:0007669"/>
    <property type="project" value="UniProtKB-KW"/>
</dbReference>
<dbReference type="GO" id="GO:0046872">
    <property type="term" value="F:metal ion binding"/>
    <property type="evidence" value="ECO:0007669"/>
    <property type="project" value="UniProtKB-KW"/>
</dbReference>
<dbReference type="GO" id="GO:0009098">
    <property type="term" value="P:L-leucine biosynthetic process"/>
    <property type="evidence" value="ECO:0007669"/>
    <property type="project" value="UniProtKB-UniRule"/>
</dbReference>
<dbReference type="CDD" id="cd01583">
    <property type="entry name" value="IPMI"/>
    <property type="match status" value="1"/>
</dbReference>
<dbReference type="FunFam" id="3.30.499.10:FF:000006">
    <property type="entry name" value="3-isopropylmalate dehydratase large subunit"/>
    <property type="match status" value="1"/>
</dbReference>
<dbReference type="FunFam" id="3.30.499.10:FF:000007">
    <property type="entry name" value="3-isopropylmalate dehydratase large subunit"/>
    <property type="match status" value="1"/>
</dbReference>
<dbReference type="Gene3D" id="3.30.499.10">
    <property type="entry name" value="Aconitase, domain 3"/>
    <property type="match status" value="2"/>
</dbReference>
<dbReference type="HAMAP" id="MF_01026">
    <property type="entry name" value="LeuC_type1"/>
    <property type="match status" value="1"/>
</dbReference>
<dbReference type="InterPro" id="IPR004430">
    <property type="entry name" value="3-IsopropMal_deHydase_lsu"/>
</dbReference>
<dbReference type="InterPro" id="IPR015931">
    <property type="entry name" value="Acnase/IPM_dHydase_lsu_aba_1/3"/>
</dbReference>
<dbReference type="InterPro" id="IPR001030">
    <property type="entry name" value="Acoase/IPM_deHydtase_lsu_aba"/>
</dbReference>
<dbReference type="InterPro" id="IPR018136">
    <property type="entry name" value="Aconitase_4Fe-4S_BS"/>
</dbReference>
<dbReference type="InterPro" id="IPR036008">
    <property type="entry name" value="Aconitase_4Fe-4S_dom"/>
</dbReference>
<dbReference type="InterPro" id="IPR050067">
    <property type="entry name" value="IPM_dehydratase_rel_enz"/>
</dbReference>
<dbReference type="InterPro" id="IPR033941">
    <property type="entry name" value="IPMI_cat"/>
</dbReference>
<dbReference type="NCBIfam" id="TIGR00170">
    <property type="entry name" value="leuC"/>
    <property type="match status" value="1"/>
</dbReference>
<dbReference type="NCBIfam" id="NF004016">
    <property type="entry name" value="PRK05478.1"/>
    <property type="match status" value="1"/>
</dbReference>
<dbReference type="NCBIfam" id="NF009116">
    <property type="entry name" value="PRK12466.1"/>
    <property type="match status" value="1"/>
</dbReference>
<dbReference type="PANTHER" id="PTHR43822:SF9">
    <property type="entry name" value="3-ISOPROPYLMALATE DEHYDRATASE"/>
    <property type="match status" value="1"/>
</dbReference>
<dbReference type="PANTHER" id="PTHR43822">
    <property type="entry name" value="HOMOACONITASE, MITOCHONDRIAL-RELATED"/>
    <property type="match status" value="1"/>
</dbReference>
<dbReference type="Pfam" id="PF00330">
    <property type="entry name" value="Aconitase"/>
    <property type="match status" value="1"/>
</dbReference>
<dbReference type="PRINTS" id="PR00415">
    <property type="entry name" value="ACONITASE"/>
</dbReference>
<dbReference type="SUPFAM" id="SSF53732">
    <property type="entry name" value="Aconitase iron-sulfur domain"/>
    <property type="match status" value="1"/>
</dbReference>
<dbReference type="PROSITE" id="PS00450">
    <property type="entry name" value="ACONITASE_1"/>
    <property type="match status" value="1"/>
</dbReference>
<dbReference type="PROSITE" id="PS01244">
    <property type="entry name" value="ACONITASE_2"/>
    <property type="match status" value="1"/>
</dbReference>
<protein>
    <recommendedName>
        <fullName evidence="1">3-isopropylmalate dehydratase large subunit</fullName>
        <ecNumber evidence="1">4.2.1.33</ecNumber>
    </recommendedName>
    <alternativeName>
        <fullName evidence="1">Alpha-IPM isomerase</fullName>
        <shortName evidence="1">IPMI</shortName>
    </alternativeName>
    <alternativeName>
        <fullName evidence="1">Isopropylmalate isomerase</fullName>
    </alternativeName>
</protein>
<reference key="1">
    <citation type="journal article" date="2008" name="PLoS ONE">
        <title>Genome biology of Actinobacillus pleuropneumoniae JL03, an isolate of serotype 3 prevalent in China.</title>
        <authorList>
            <person name="Xu Z."/>
            <person name="Zhou Y."/>
            <person name="Li L."/>
            <person name="Zhou R."/>
            <person name="Xiao S."/>
            <person name="Wan Y."/>
            <person name="Zhang S."/>
            <person name="Wang K."/>
            <person name="Li W."/>
            <person name="Li L."/>
            <person name="Jin H."/>
            <person name="Kang M."/>
            <person name="Dalai B."/>
            <person name="Li T."/>
            <person name="Liu L."/>
            <person name="Cheng Y."/>
            <person name="Zhang L."/>
            <person name="Xu T."/>
            <person name="Zheng H."/>
            <person name="Pu S."/>
            <person name="Wang B."/>
            <person name="Gu W."/>
            <person name="Zhang X.L."/>
            <person name="Zhu G.-F."/>
            <person name="Wang S."/>
            <person name="Zhao G.-P."/>
            <person name="Chen H."/>
        </authorList>
    </citation>
    <scope>NUCLEOTIDE SEQUENCE [LARGE SCALE GENOMIC DNA]</scope>
    <source>
        <strain>JL03</strain>
    </source>
</reference>
<organism>
    <name type="scientific">Actinobacillus pleuropneumoniae serotype 3 (strain JL03)</name>
    <dbReference type="NCBI Taxonomy" id="434271"/>
    <lineage>
        <taxon>Bacteria</taxon>
        <taxon>Pseudomonadati</taxon>
        <taxon>Pseudomonadota</taxon>
        <taxon>Gammaproteobacteria</taxon>
        <taxon>Pasteurellales</taxon>
        <taxon>Pasteurellaceae</taxon>
        <taxon>Actinobacillus</taxon>
    </lineage>
</organism>
<comment type="function">
    <text evidence="1">Catalyzes the isomerization between 2-isopropylmalate and 3-isopropylmalate, via the formation of 2-isopropylmaleate.</text>
</comment>
<comment type="catalytic activity">
    <reaction evidence="1">
        <text>(2R,3S)-3-isopropylmalate = (2S)-2-isopropylmalate</text>
        <dbReference type="Rhea" id="RHEA:32287"/>
        <dbReference type="ChEBI" id="CHEBI:1178"/>
        <dbReference type="ChEBI" id="CHEBI:35121"/>
        <dbReference type="EC" id="4.2.1.33"/>
    </reaction>
</comment>
<comment type="cofactor">
    <cofactor evidence="1">
        <name>[4Fe-4S] cluster</name>
        <dbReference type="ChEBI" id="CHEBI:49883"/>
    </cofactor>
    <text evidence="1">Binds 1 [4Fe-4S] cluster per subunit.</text>
</comment>
<comment type="pathway">
    <text evidence="1">Amino-acid biosynthesis; L-leucine biosynthesis; L-leucine from 3-methyl-2-oxobutanoate: step 2/4.</text>
</comment>
<comment type="subunit">
    <text evidence="1">Heterodimer of LeuC and LeuD.</text>
</comment>
<comment type="similarity">
    <text evidence="1">Belongs to the aconitase/IPM isomerase family. LeuC type 1 subfamily.</text>
</comment>
<proteinExistence type="inferred from homology"/>
<name>LEUC_ACTPJ</name>